<comment type="function">
    <text evidence="2">Protein-lysine N-methyltransferase that methylates both histones and non-histone proteins, including p53/TP53 and RB1. Specifically trimethylates histone H3 'Lys-4' (H3K4me3) in vivo. The activity requires interaction with HSP90alpha. Shows even higher methyltransferase activity on p53/TP53. Monomethylates 'Lys-370' of p53/TP53, leading to decreased DNA-binding activity and subsequent transcriptional regulation activity of p53/TP53. Monomethylates RB1 at 'Lys-860'.</text>
</comment>
<comment type="catalytic activity">
    <reaction evidence="2">
        <text>L-lysyl(4)-[histone H3] + 3 S-adenosyl-L-methionine = N(6),N(6),N(6)-trimethyl-L-lysyl(4)-[histone H3] + 3 S-adenosyl-L-homocysteine + 3 H(+)</text>
        <dbReference type="Rhea" id="RHEA:60260"/>
        <dbReference type="Rhea" id="RHEA-COMP:15537"/>
        <dbReference type="Rhea" id="RHEA-COMP:15547"/>
        <dbReference type="ChEBI" id="CHEBI:15378"/>
        <dbReference type="ChEBI" id="CHEBI:29969"/>
        <dbReference type="ChEBI" id="CHEBI:57856"/>
        <dbReference type="ChEBI" id="CHEBI:59789"/>
        <dbReference type="ChEBI" id="CHEBI:61961"/>
        <dbReference type="EC" id="2.1.1.354"/>
    </reaction>
</comment>
<comment type="catalytic activity">
    <reaction evidence="2">
        <text>L-lysyl-[protein] + S-adenosyl-L-methionine = N(6)-methyl-L-lysyl-[protein] + S-adenosyl-L-homocysteine + H(+)</text>
        <dbReference type="Rhea" id="RHEA:51736"/>
        <dbReference type="Rhea" id="RHEA-COMP:9752"/>
        <dbReference type="Rhea" id="RHEA-COMP:13053"/>
        <dbReference type="ChEBI" id="CHEBI:15378"/>
        <dbReference type="ChEBI" id="CHEBI:29969"/>
        <dbReference type="ChEBI" id="CHEBI:57856"/>
        <dbReference type="ChEBI" id="CHEBI:59789"/>
        <dbReference type="ChEBI" id="CHEBI:61929"/>
    </reaction>
</comment>
<comment type="subcellular location">
    <subcellularLocation>
        <location evidence="1">Cytoplasm</location>
        <location evidence="1">Cytosol</location>
    </subcellularLocation>
    <subcellularLocation>
        <location evidence="1">Nucleus</location>
    </subcellularLocation>
</comment>
<comment type="developmental stage">
    <text evidence="5">Expressed from stage 2, indicating it is expressed maternally. Expression is persistent through stage 40.</text>
</comment>
<comment type="similarity">
    <text evidence="4">Belongs to the class V-like SAM-binding methyltransferase superfamily.</text>
</comment>
<evidence type="ECO:0000250" key="1"/>
<evidence type="ECO:0000250" key="2">
    <source>
        <dbReference type="UniProtKB" id="Q9NRG4"/>
    </source>
</evidence>
<evidence type="ECO:0000255" key="3">
    <source>
        <dbReference type="PROSITE-ProRule" id="PRU00134"/>
    </source>
</evidence>
<evidence type="ECO:0000255" key="4">
    <source>
        <dbReference type="PROSITE-ProRule" id="PRU00190"/>
    </source>
</evidence>
<evidence type="ECO:0000269" key="5">
    <source>
    </source>
</evidence>
<organism>
    <name type="scientific">Xenopus laevis</name>
    <name type="common">African clawed frog</name>
    <dbReference type="NCBI Taxonomy" id="8355"/>
    <lineage>
        <taxon>Eukaryota</taxon>
        <taxon>Metazoa</taxon>
        <taxon>Chordata</taxon>
        <taxon>Craniata</taxon>
        <taxon>Vertebrata</taxon>
        <taxon>Euteleostomi</taxon>
        <taxon>Amphibia</taxon>
        <taxon>Batrachia</taxon>
        <taxon>Anura</taxon>
        <taxon>Pipoidea</taxon>
        <taxon>Pipidae</taxon>
        <taxon>Xenopodinae</taxon>
        <taxon>Xenopus</taxon>
        <taxon>Xenopus</taxon>
    </lineage>
</organism>
<accession>Q6GN68</accession>
<keyword id="KW-0156">Chromatin regulator</keyword>
<keyword id="KW-0963">Cytoplasm</keyword>
<keyword id="KW-0479">Metal-binding</keyword>
<keyword id="KW-0489">Methyltransferase</keyword>
<keyword id="KW-0539">Nucleus</keyword>
<keyword id="KW-1185">Reference proteome</keyword>
<keyword id="KW-0949">S-adenosyl-L-methionine</keyword>
<keyword id="KW-0804">Transcription</keyword>
<keyword id="KW-0805">Transcription regulation</keyword>
<keyword id="KW-0808">Transferase</keyword>
<keyword id="KW-0862">Zinc</keyword>
<keyword id="KW-0863">Zinc-finger</keyword>
<name>SMY2B_XENLA</name>
<protein>
    <recommendedName>
        <fullName>N-lysine methyltransferase SMYD2-B</fullName>
        <ecNumber evidence="2">2.1.1.-</ecNumber>
    </recommendedName>
    <alternativeName>
        <fullName>Histone methyltransferase SMYD2-B</fullName>
        <ecNumber evidence="2">2.1.1.354</ecNumber>
    </alternativeName>
    <alternativeName>
        <fullName>SET and MYND domain-containing protein 2B</fullName>
    </alternativeName>
</protein>
<reference key="1">
    <citation type="submission" date="2004-06" db="EMBL/GenBank/DDBJ databases">
        <authorList>
            <consortium name="NIH - Xenopus Gene Collection (XGC) project"/>
        </authorList>
    </citation>
    <scope>NUCLEOTIDE SEQUENCE [LARGE SCALE MRNA]</scope>
    <source>
        <tissue>Embryo</tissue>
    </source>
</reference>
<reference key="2">
    <citation type="journal article" date="2008" name="Cytotechnology">
        <title>smyd1 and smyd2 are expressed in muscle tissue in Xenopus laevis.</title>
        <authorList>
            <person name="Kawamura S."/>
            <person name="Yoshigai E."/>
            <person name="Kuhara S."/>
            <person name="Tashiro K."/>
        </authorList>
    </citation>
    <scope>DEVELOPMENTAL STAGE</scope>
</reference>
<sequence>MGQPEGLERFDSPGKGRGLKATRSFALGELLFSCPAYTYVLTDNERGNHCDFCFTRKEGLSKCGKCKQAFYCNVDCQKGDWPMHKLECSSMCSSGQNWCPSETVRLTARILAKQKTQTERTASERFMSVKEFESHLSKLDNEKKELIENDISALHRFYSKNVHNCDNAALEFLFAQVNCNGFTIEDEELSHLGSAIFPDVALMNHSCCPNVIVTYKGTVAEVRAVQEIHAGEEVFTSYIDLLYPTEDRNDRLKDSYFFSCDCRECSTKQKDPAKLELRKLSDPPSPQTVRDMITYARNVVEEFRRAKHYKTPSELLEICELSLDKMGSVFVDSNVYMLHMMYQAMGVCLYMQDWEGALKYGEKIIKPYSKHYPAYSLNVASMWLKLGRLYMGLEKNTIGTKALKKALAIMEIAHGPDHYYIAEIKKELEL</sequence>
<feature type="chain" id="PRO_0000405851" description="N-lysine methyltransferase SMYD2-B">
    <location>
        <begin position="1"/>
        <end position="430"/>
    </location>
</feature>
<feature type="domain" description="SET" evidence="4">
    <location>
        <begin position="5"/>
        <end position="239"/>
    </location>
</feature>
<feature type="zinc finger region" description="MYND-type" evidence="3">
    <location>
        <begin position="50"/>
        <end position="88"/>
    </location>
</feature>
<feature type="binding site" evidence="1">
    <location>
        <begin position="15"/>
        <end position="17"/>
    </location>
    <ligand>
        <name>S-adenosyl-L-methionine</name>
        <dbReference type="ChEBI" id="CHEBI:59789"/>
    </ligand>
</feature>
<feature type="binding site" evidence="3">
    <location>
        <position position="50"/>
    </location>
    <ligand>
        <name>Zn(2+)</name>
        <dbReference type="ChEBI" id="CHEBI:29105"/>
        <label>1</label>
    </ligand>
</feature>
<feature type="binding site" evidence="3">
    <location>
        <position position="53"/>
    </location>
    <ligand>
        <name>Zn(2+)</name>
        <dbReference type="ChEBI" id="CHEBI:29105"/>
        <label>1</label>
    </ligand>
</feature>
<feature type="binding site" evidence="3">
    <location>
        <position position="63"/>
    </location>
    <ligand>
        <name>Zn(2+)</name>
        <dbReference type="ChEBI" id="CHEBI:29105"/>
        <label>2</label>
    </ligand>
</feature>
<feature type="binding site" evidence="3">
    <location>
        <position position="66"/>
    </location>
    <ligand>
        <name>Zn(2+)</name>
        <dbReference type="ChEBI" id="CHEBI:29105"/>
        <label>2</label>
    </ligand>
</feature>
<feature type="binding site" evidence="3">
    <location>
        <position position="72"/>
    </location>
    <ligand>
        <name>Zn(2+)</name>
        <dbReference type="ChEBI" id="CHEBI:29105"/>
        <label>1</label>
    </ligand>
</feature>
<feature type="binding site" evidence="3">
    <location>
        <position position="76"/>
    </location>
    <ligand>
        <name>Zn(2+)</name>
        <dbReference type="ChEBI" id="CHEBI:29105"/>
        <label>1</label>
    </ligand>
</feature>
<feature type="binding site" evidence="3">
    <location>
        <position position="84"/>
    </location>
    <ligand>
        <name>Zn(2+)</name>
        <dbReference type="ChEBI" id="CHEBI:29105"/>
        <label>2</label>
    </ligand>
</feature>
<feature type="binding site" evidence="3">
    <location>
        <position position="88"/>
    </location>
    <ligand>
        <name>Zn(2+)</name>
        <dbReference type="ChEBI" id="CHEBI:29105"/>
        <label>2</label>
    </ligand>
</feature>
<feature type="binding site" evidence="4">
    <location>
        <position position="135"/>
    </location>
    <ligand>
        <name>S-adenosyl-L-methionine</name>
        <dbReference type="ChEBI" id="CHEBI:59789"/>
    </ligand>
</feature>
<feature type="binding site" evidence="1">
    <location>
        <begin position="204"/>
        <end position="205"/>
    </location>
    <ligand>
        <name>S-adenosyl-L-methionine</name>
        <dbReference type="ChEBI" id="CHEBI:59789"/>
    </ligand>
</feature>
<feature type="binding site" evidence="1">
    <location>
        <begin position="256"/>
        <end position="258"/>
    </location>
    <ligand>
        <name>S-adenosyl-L-methionine</name>
        <dbReference type="ChEBI" id="CHEBI:59789"/>
    </ligand>
</feature>
<dbReference type="EC" id="2.1.1.-" evidence="2"/>
<dbReference type="EC" id="2.1.1.354" evidence="2"/>
<dbReference type="EMBL" id="BC073650">
    <property type="protein sequence ID" value="AAH73650.1"/>
    <property type="molecule type" value="mRNA"/>
</dbReference>
<dbReference type="RefSeq" id="NP_001085986.1">
    <property type="nucleotide sequence ID" value="NM_001092517.1"/>
</dbReference>
<dbReference type="SMR" id="Q6GN68"/>
<dbReference type="DNASU" id="444415"/>
<dbReference type="GeneID" id="444415"/>
<dbReference type="KEGG" id="xla:444415"/>
<dbReference type="AGR" id="Xenbase:XB-GENE-17330768"/>
<dbReference type="CTD" id="444415"/>
<dbReference type="Xenbase" id="XB-GENE-17330768">
    <property type="gene designation" value="smyd2.S"/>
</dbReference>
<dbReference type="OrthoDB" id="5945798at2759"/>
<dbReference type="Proteomes" id="UP000186698">
    <property type="component" value="Chromosome 5S"/>
</dbReference>
<dbReference type="Bgee" id="444415">
    <property type="expression patterns" value="Expressed in neurula embryo and 19 other cell types or tissues"/>
</dbReference>
<dbReference type="GO" id="GO:0005737">
    <property type="term" value="C:cytoplasm"/>
    <property type="evidence" value="ECO:0000250"/>
    <property type="project" value="UniProtKB"/>
</dbReference>
<dbReference type="GO" id="GO:0005829">
    <property type="term" value="C:cytosol"/>
    <property type="evidence" value="ECO:0000250"/>
    <property type="project" value="UniProtKB"/>
</dbReference>
<dbReference type="GO" id="GO:0005634">
    <property type="term" value="C:nucleus"/>
    <property type="evidence" value="ECO:0000250"/>
    <property type="project" value="UniProtKB"/>
</dbReference>
<dbReference type="GO" id="GO:0046975">
    <property type="term" value="F:histone H3K36 methyltransferase activity"/>
    <property type="evidence" value="ECO:0000250"/>
    <property type="project" value="UniProtKB"/>
</dbReference>
<dbReference type="GO" id="GO:0140999">
    <property type="term" value="F:histone H3K4 trimethyltransferase activity"/>
    <property type="evidence" value="ECO:0007669"/>
    <property type="project" value="UniProtKB-EC"/>
</dbReference>
<dbReference type="GO" id="GO:0016279">
    <property type="term" value="F:protein-lysine N-methyltransferase activity"/>
    <property type="evidence" value="ECO:0000250"/>
    <property type="project" value="UniProtKB"/>
</dbReference>
<dbReference type="GO" id="GO:0000993">
    <property type="term" value="F:RNA polymerase II complex binding"/>
    <property type="evidence" value="ECO:0000250"/>
    <property type="project" value="UniProtKB"/>
</dbReference>
<dbReference type="GO" id="GO:0008270">
    <property type="term" value="F:zinc ion binding"/>
    <property type="evidence" value="ECO:0007669"/>
    <property type="project" value="UniProtKB-KW"/>
</dbReference>
<dbReference type="GO" id="GO:0008285">
    <property type="term" value="P:negative regulation of cell population proliferation"/>
    <property type="evidence" value="ECO:0000250"/>
    <property type="project" value="UniProtKB"/>
</dbReference>
<dbReference type="GO" id="GO:0000122">
    <property type="term" value="P:negative regulation of transcription by RNA polymerase II"/>
    <property type="evidence" value="ECO:0000250"/>
    <property type="project" value="UniProtKB"/>
</dbReference>
<dbReference type="GO" id="GO:0018027">
    <property type="term" value="P:peptidyl-lysine dimethylation"/>
    <property type="evidence" value="ECO:0000250"/>
    <property type="project" value="UniProtKB"/>
</dbReference>
<dbReference type="GO" id="GO:0018026">
    <property type="term" value="P:peptidyl-lysine monomethylation"/>
    <property type="evidence" value="ECO:0000250"/>
    <property type="project" value="UniProtKB"/>
</dbReference>
<dbReference type="GO" id="GO:0043516">
    <property type="term" value="P:regulation of DNA damage response, signal transduction by p53 class mediator"/>
    <property type="evidence" value="ECO:0000250"/>
    <property type="project" value="UniProtKB"/>
</dbReference>
<dbReference type="CDD" id="cd19202">
    <property type="entry name" value="SET_SMYD2"/>
    <property type="match status" value="1"/>
</dbReference>
<dbReference type="FunFam" id="2.170.270.10:FF:000013">
    <property type="entry name" value="Histone-lysine N-methyltransferase SMYD1 isoform 1"/>
    <property type="match status" value="1"/>
</dbReference>
<dbReference type="FunFam" id="1.25.40.10:FF:000298">
    <property type="entry name" value="N-lysine methyltransferase SMYD2"/>
    <property type="match status" value="1"/>
</dbReference>
<dbReference type="FunFam" id="1.25.40.970:FF:000002">
    <property type="entry name" value="N-lysine methyltransferase SMYD2 isoform X1"/>
    <property type="match status" value="1"/>
</dbReference>
<dbReference type="FunFam" id="6.10.140.2220:FF:000013">
    <property type="entry name" value="N-lysine methyltransferase SMYD2 isoform X1"/>
    <property type="match status" value="1"/>
</dbReference>
<dbReference type="Gene3D" id="1.10.220.160">
    <property type="match status" value="1"/>
</dbReference>
<dbReference type="Gene3D" id="1.25.40.970">
    <property type="match status" value="1"/>
</dbReference>
<dbReference type="Gene3D" id="6.10.140.2220">
    <property type="match status" value="1"/>
</dbReference>
<dbReference type="Gene3D" id="2.170.270.10">
    <property type="entry name" value="SET domain"/>
    <property type="match status" value="1"/>
</dbReference>
<dbReference type="Gene3D" id="1.25.40.10">
    <property type="entry name" value="Tetratricopeptide repeat domain"/>
    <property type="match status" value="1"/>
</dbReference>
<dbReference type="InterPro" id="IPR050869">
    <property type="entry name" value="H3K4_H4K5_MeTrfase"/>
</dbReference>
<dbReference type="InterPro" id="IPR001214">
    <property type="entry name" value="SET_dom"/>
</dbReference>
<dbReference type="InterPro" id="IPR046341">
    <property type="entry name" value="SET_dom_sf"/>
</dbReference>
<dbReference type="InterPro" id="IPR044419">
    <property type="entry name" value="SMYD2_SET"/>
</dbReference>
<dbReference type="InterPro" id="IPR011990">
    <property type="entry name" value="TPR-like_helical_dom_sf"/>
</dbReference>
<dbReference type="InterPro" id="IPR002893">
    <property type="entry name" value="Znf_MYND"/>
</dbReference>
<dbReference type="PANTHER" id="PTHR12197">
    <property type="entry name" value="HISTONE-LYSINE N-METHYLTRANSFERASE SMYD"/>
    <property type="match status" value="1"/>
</dbReference>
<dbReference type="PANTHER" id="PTHR12197:SF193">
    <property type="entry name" value="N-LYSINE METHYLTRANSFERASE SMYD2"/>
    <property type="match status" value="1"/>
</dbReference>
<dbReference type="Pfam" id="PF00856">
    <property type="entry name" value="SET"/>
    <property type="match status" value="1"/>
</dbReference>
<dbReference type="Pfam" id="PF01753">
    <property type="entry name" value="zf-MYND"/>
    <property type="match status" value="1"/>
</dbReference>
<dbReference type="SMART" id="SM00317">
    <property type="entry name" value="SET"/>
    <property type="match status" value="1"/>
</dbReference>
<dbReference type="SUPFAM" id="SSF82199">
    <property type="entry name" value="SET domain"/>
    <property type="match status" value="1"/>
</dbReference>
<dbReference type="SUPFAM" id="SSF48452">
    <property type="entry name" value="TPR-like"/>
    <property type="match status" value="1"/>
</dbReference>
<dbReference type="PROSITE" id="PS50280">
    <property type="entry name" value="SET"/>
    <property type="match status" value="1"/>
</dbReference>
<dbReference type="PROSITE" id="PS01360">
    <property type="entry name" value="ZF_MYND_1"/>
    <property type="match status" value="1"/>
</dbReference>
<dbReference type="PROSITE" id="PS50865">
    <property type="entry name" value="ZF_MYND_2"/>
    <property type="match status" value="1"/>
</dbReference>
<proteinExistence type="evidence at transcript level"/>
<gene>
    <name type="primary">smyd2-b</name>
</gene>